<organism>
    <name type="scientific">Camellia sinensis</name>
    <name type="common">Tea plant</name>
    <name type="synonym">Thea sinensis</name>
    <dbReference type="NCBI Taxonomy" id="4442"/>
    <lineage>
        <taxon>Eukaryota</taxon>
        <taxon>Viridiplantae</taxon>
        <taxon>Streptophyta</taxon>
        <taxon>Embryophyta</taxon>
        <taxon>Tracheophyta</taxon>
        <taxon>Spermatophyta</taxon>
        <taxon>Magnoliopsida</taxon>
        <taxon>eudicotyledons</taxon>
        <taxon>Gunneridae</taxon>
        <taxon>Pentapetalae</taxon>
        <taxon>asterids</taxon>
        <taxon>Ericales</taxon>
        <taxon>Theaceae</taxon>
        <taxon>Camellia</taxon>
    </lineage>
</organism>
<evidence type="ECO:0000250" key="1">
    <source>
        <dbReference type="UniProtKB" id="A0A0S2PMA8"/>
    </source>
</evidence>
<evidence type="ECO:0000250" key="2">
    <source>
        <dbReference type="UniProtKB" id="A0A6C0WW36"/>
    </source>
</evidence>
<evidence type="ECO:0000250" key="3">
    <source>
        <dbReference type="UniProtKB" id="Q2HXI6"/>
    </source>
</evidence>
<evidence type="ECO:0000250" key="4">
    <source>
        <dbReference type="UniProtKB" id="Q9FLN8"/>
    </source>
</evidence>
<evidence type="ECO:0000250" key="5">
    <source>
        <dbReference type="UniProtKB" id="Q9FZN8"/>
    </source>
</evidence>
<evidence type="ECO:0000269" key="6">
    <source>
    </source>
</evidence>
<evidence type="ECO:0000303" key="7">
    <source>
    </source>
</evidence>
<evidence type="ECO:0000303" key="8">
    <source ref="1"/>
</evidence>
<evidence type="ECO:0000305" key="9"/>
<comment type="function">
    <text evidence="6">Involved in the biosynthesis of caffeine (PubMed:26773541). Catalyzes the conversion of 7-methylxanthine (7mX) to theobromine and of theobromine to caffeine (PubMed:26773541).</text>
</comment>
<comment type="catalytic activity">
    <reaction evidence="6">
        <text>theobromine + S-adenosyl-L-methionine = caffeine + S-adenosyl-L-homocysteine + H(+)</text>
        <dbReference type="Rhea" id="RHEA:20944"/>
        <dbReference type="ChEBI" id="CHEBI:15378"/>
        <dbReference type="ChEBI" id="CHEBI:27732"/>
        <dbReference type="ChEBI" id="CHEBI:28946"/>
        <dbReference type="ChEBI" id="CHEBI:57856"/>
        <dbReference type="ChEBI" id="CHEBI:59789"/>
        <dbReference type="EC" id="2.1.1.160"/>
    </reaction>
    <physiologicalReaction direction="left-to-right" evidence="6">
        <dbReference type="Rhea" id="RHEA:20945"/>
    </physiologicalReaction>
</comment>
<comment type="catalytic activity">
    <reaction evidence="6">
        <text>7-methylxanthine + S-adenosyl-L-methionine = theobromine + S-adenosyl-L-homocysteine + H(+)</text>
        <dbReference type="Rhea" id="RHEA:24604"/>
        <dbReference type="ChEBI" id="CHEBI:15378"/>
        <dbReference type="ChEBI" id="CHEBI:28946"/>
        <dbReference type="ChEBI" id="CHEBI:48991"/>
        <dbReference type="ChEBI" id="CHEBI:57856"/>
        <dbReference type="ChEBI" id="CHEBI:59789"/>
        <dbReference type="EC" id="2.1.1.160"/>
    </reaction>
    <physiologicalReaction direction="left-to-right" evidence="6">
        <dbReference type="Rhea" id="RHEA:24605"/>
    </physiologicalReaction>
</comment>
<comment type="cofactor">
    <cofactor evidence="4">
        <name>Mg(2+)</name>
        <dbReference type="ChEBI" id="CHEBI:18420"/>
    </cofactor>
    <text evidence="4">Binds 1 Mg(2+) ion per subunit.</text>
</comment>
<comment type="pathway">
    <text evidence="5">Alkaloid biosynthesis.</text>
</comment>
<comment type="similarity">
    <text evidence="9">Belongs to the methyltransferase superfamily. Type-7 methyltransferase family.</text>
</comment>
<reference key="1">
    <citation type="submission" date="2015-06" db="EMBL/GenBank/DDBJ databases">
        <authorList>
            <person name="Hoefler B.C."/>
            <person name="Straight P.D."/>
        </authorList>
    </citation>
    <scope>NUCLEOTIDE SEQUENCE [MRNA]</scope>
</reference>
<reference key="2">
    <citation type="journal article" date="2016" name="Plant Physiol. Biochem.">
        <title>Natural allelic variations of TCS1 play a crucial role in caffeine biosynthesis of tea plant and its related species.</title>
        <authorList>
            <person name="Jin J.-Q."/>
            <person name="Yao M.-Z."/>
            <person name="Ma C.-L."/>
            <person name="Ma J.-Q."/>
            <person name="Chen L."/>
        </authorList>
    </citation>
    <scope>FUNCTION</scope>
    <scope>CATALYTIC ACTIVITY</scope>
    <scope>GENE FAMILY</scope>
    <scope>NOMENCLATURE</scope>
</reference>
<feature type="chain" id="PRO_0000451796" description="Caffeine synthase 3">
    <location>
        <begin position="1"/>
        <end position="368"/>
    </location>
</feature>
<feature type="binding site" evidence="2">
    <location>
        <position position="23"/>
    </location>
    <ligand>
        <name>S-adenosyl-L-homocysteine</name>
        <dbReference type="ChEBI" id="CHEBI:57856"/>
    </ligand>
</feature>
<feature type="binding site" evidence="2">
    <location>
        <position position="30"/>
    </location>
    <ligand>
        <name>caffeine</name>
        <dbReference type="ChEBI" id="CHEBI:27732"/>
    </ligand>
</feature>
<feature type="binding site" evidence="2">
    <location>
        <position position="65"/>
    </location>
    <ligand>
        <name>S-adenosyl-L-homocysteine</name>
        <dbReference type="ChEBI" id="CHEBI:57856"/>
    </ligand>
</feature>
<feature type="binding site" evidence="2">
    <location>
        <position position="70"/>
    </location>
    <ligand>
        <name>S-adenosyl-L-homocysteine</name>
        <dbReference type="ChEBI" id="CHEBI:57856"/>
    </ligand>
</feature>
<feature type="binding site" evidence="2">
    <location>
        <position position="102"/>
    </location>
    <ligand>
        <name>S-adenosyl-L-homocysteine</name>
        <dbReference type="ChEBI" id="CHEBI:57856"/>
    </ligand>
</feature>
<feature type="binding site" evidence="2">
    <location>
        <position position="103"/>
    </location>
    <ligand>
        <name>S-adenosyl-L-homocysteine</name>
        <dbReference type="ChEBI" id="CHEBI:57856"/>
    </ligand>
</feature>
<feature type="binding site" evidence="2">
    <location>
        <position position="137"/>
    </location>
    <ligand>
        <name>S-adenosyl-L-homocysteine</name>
        <dbReference type="ChEBI" id="CHEBI:57856"/>
    </ligand>
</feature>
<feature type="binding site" evidence="2">
    <location>
        <position position="138"/>
    </location>
    <ligand>
        <name>S-adenosyl-L-homocysteine</name>
        <dbReference type="ChEBI" id="CHEBI:57856"/>
    </ligand>
</feature>
<feature type="binding site" evidence="2">
    <location>
        <position position="155"/>
    </location>
    <ligand>
        <name>caffeine</name>
        <dbReference type="ChEBI" id="CHEBI:27732"/>
    </ligand>
</feature>
<feature type="binding site" evidence="2">
    <location>
        <position position="158"/>
    </location>
    <ligand>
        <name>caffeine</name>
        <dbReference type="ChEBI" id="CHEBI:27732"/>
    </ligand>
</feature>
<feature type="binding site" evidence="2">
    <location>
        <position position="159"/>
    </location>
    <ligand>
        <name>caffeine</name>
        <dbReference type="ChEBI" id="CHEBI:27732"/>
    </ligand>
</feature>
<feature type="binding site" evidence="4">
    <location>
        <position position="176"/>
    </location>
    <ligand>
        <name>Mg(2+)</name>
        <dbReference type="ChEBI" id="CHEBI:18420"/>
    </ligand>
</feature>
<feature type="binding site" evidence="2">
    <location>
        <position position="224"/>
    </location>
    <ligand>
        <name>caffeine</name>
        <dbReference type="ChEBI" id="CHEBI:27732"/>
    </ligand>
</feature>
<feature type="binding site" evidence="4">
    <location>
        <position position="262"/>
    </location>
    <ligand>
        <name>Mg(2+)</name>
        <dbReference type="ChEBI" id="CHEBI:18420"/>
    </ligand>
</feature>
<feature type="binding site" evidence="4">
    <location>
        <position position="264"/>
    </location>
    <ligand>
        <name>Mg(2+)</name>
        <dbReference type="ChEBI" id="CHEBI:18420"/>
    </ligand>
</feature>
<feature type="binding site" evidence="4">
    <location>
        <position position="265"/>
    </location>
    <ligand>
        <name>Mg(2+)</name>
        <dbReference type="ChEBI" id="CHEBI:18420"/>
    </ligand>
</feature>
<feature type="binding site" evidence="2">
    <location>
        <position position="320"/>
    </location>
    <ligand>
        <name>caffeine</name>
        <dbReference type="ChEBI" id="CHEBI:27732"/>
    </ligand>
</feature>
<feature type="site" description="Involved in substrate discrimination" evidence="5">
    <location>
        <position position="152"/>
    </location>
</feature>
<feature type="site" description="Involved in substrate discrimination" evidence="3">
    <location>
        <position position="224"/>
    </location>
</feature>
<feature type="site" description="Involved in substrate discrimination" evidence="1">
    <location>
        <position position="268"/>
    </location>
</feature>
<feature type="site" description="Involved in substrate discrimination" evidence="5">
    <location>
        <position position="316"/>
    </location>
</feature>
<feature type="site" description="Involved in substrate discrimination" evidence="5">
    <location>
        <position position="331"/>
    </location>
</feature>
<gene>
    <name evidence="7" type="primary">TCS1E</name>
</gene>
<proteinExistence type="evidence at protein level"/>
<sequence length="368" mass="41183">MELAMGKVNEVLFMNRGEGESSYAQNSSFTQQVASMARPALENAVKTLFSKDFHLQALNAADLGCAAGPNTFAVISTTKRMMEKKCRELNCQTLELQVYLNDLFGNDFNTLFKGLSSEVVGNKCEEVPCYVMGVPGSFHGRLFPRSSLHLVHSSYSVHWLTQAPKGLTSREGLALNKGKIYISKTSPPVVREAYLSQFHEDFTMFLNARSQEVVPNGCMVLILRGRKASDPSDMESCFTWELLAIAIAELVSQGLIDEDKLDTFNIPCYFPSLEEVKDIVERDGSFTIDHMEGFELDSLQMQENDKWVRGENFTKVVRAFTEPIISNQFGHEIMGKLYDKFTHIVVSDLEAKLPKTTSIILVLSKIDG</sequence>
<protein>
    <recommendedName>
        <fullName evidence="8">Caffeine synthase 3</fullName>
        <shortName evidence="7">TCS1e</shortName>
        <ecNumber evidence="6">2.1.1.160</ecNumber>
    </recommendedName>
</protein>
<dbReference type="EC" id="2.1.1.160" evidence="6"/>
<dbReference type="EMBL" id="KT215397">
    <property type="protein sequence ID" value="ALP01719.1"/>
    <property type="molecule type" value="mRNA"/>
</dbReference>
<dbReference type="SMR" id="A0A0S2PM82"/>
<dbReference type="GO" id="GO:0102741">
    <property type="term" value="F:caffeine synthase activity"/>
    <property type="evidence" value="ECO:0007669"/>
    <property type="project" value="UniProtKB-EC"/>
</dbReference>
<dbReference type="GO" id="GO:0046872">
    <property type="term" value="F:metal ion binding"/>
    <property type="evidence" value="ECO:0007669"/>
    <property type="project" value="UniProtKB-KW"/>
</dbReference>
<dbReference type="GO" id="GO:0032259">
    <property type="term" value="P:methylation"/>
    <property type="evidence" value="ECO:0007669"/>
    <property type="project" value="UniProtKB-KW"/>
</dbReference>
<dbReference type="Gene3D" id="1.10.1200.270">
    <property type="entry name" value="Methyltransferase, alpha-helical capping domain"/>
    <property type="match status" value="1"/>
</dbReference>
<dbReference type="Gene3D" id="3.40.50.150">
    <property type="entry name" value="Vaccinia Virus protein VP39"/>
    <property type="match status" value="1"/>
</dbReference>
<dbReference type="InterPro" id="IPR005299">
    <property type="entry name" value="MeTrfase_7"/>
</dbReference>
<dbReference type="InterPro" id="IPR042086">
    <property type="entry name" value="MeTrfase_capping"/>
</dbReference>
<dbReference type="InterPro" id="IPR029063">
    <property type="entry name" value="SAM-dependent_MTases_sf"/>
</dbReference>
<dbReference type="PANTHER" id="PTHR31009">
    <property type="entry name" value="S-ADENOSYL-L-METHIONINE:CARBOXYL METHYLTRANSFERASE FAMILY PROTEIN"/>
    <property type="match status" value="1"/>
</dbReference>
<dbReference type="Pfam" id="PF03492">
    <property type="entry name" value="Methyltransf_7"/>
    <property type="match status" value="1"/>
</dbReference>
<dbReference type="SUPFAM" id="SSF53335">
    <property type="entry name" value="S-adenosyl-L-methionine-dependent methyltransferases"/>
    <property type="match status" value="1"/>
</dbReference>
<name>TCS3_CAMSI</name>
<accession>A0A0S2PM82</accession>
<keyword id="KW-0460">Magnesium</keyword>
<keyword id="KW-0479">Metal-binding</keyword>
<keyword id="KW-0489">Methyltransferase</keyword>
<keyword id="KW-0808">Transferase</keyword>